<organism evidence="7">
    <name type="scientific">Caenorhabditis elegans</name>
    <dbReference type="NCBI Taxonomy" id="6239"/>
    <lineage>
        <taxon>Eukaryota</taxon>
        <taxon>Metazoa</taxon>
        <taxon>Ecdysozoa</taxon>
        <taxon>Nematoda</taxon>
        <taxon>Chromadorea</taxon>
        <taxon>Rhabditida</taxon>
        <taxon>Rhabditina</taxon>
        <taxon>Rhabditomorpha</taxon>
        <taxon>Rhabditoidea</taxon>
        <taxon>Rhabditidae</taxon>
        <taxon>Peloderinae</taxon>
        <taxon>Caenorhabditis</taxon>
    </lineage>
</organism>
<protein>
    <recommendedName>
        <fullName evidence="5">Calpain clp-4</fullName>
        <ecNumber evidence="2">3.4.22.-</ecNumber>
    </recommendedName>
    <alternativeName>
        <fullName evidence="6">Calpain catalytic domain-containing protein</fullName>
    </alternativeName>
</protein>
<accession>Q8IAA9</accession>
<comment type="function">
    <text evidence="1 4">Calcium-regulated non-lysosomal thiol-protease which catalyzes limited proteolysis of substrates (By similarity). Promotes starvation-induced muscle atrophy (PubMed:37628820).</text>
</comment>
<comment type="disruption phenotype">
    <text evidence="4">Less reduction in body length and muscle cell area during starvation.</text>
</comment>
<comment type="similarity">
    <text evidence="5">Belongs to the peptidase C2 family.</text>
</comment>
<evidence type="ECO:0000250" key="1">
    <source>
        <dbReference type="UniProtKB" id="P07384"/>
    </source>
</evidence>
<evidence type="ECO:0000255" key="2">
    <source>
        <dbReference type="PROSITE-ProRule" id="PRU00239"/>
    </source>
</evidence>
<evidence type="ECO:0000256" key="3">
    <source>
        <dbReference type="SAM" id="MobiDB-lite"/>
    </source>
</evidence>
<evidence type="ECO:0000269" key="4">
    <source>
    </source>
</evidence>
<evidence type="ECO:0000305" key="5"/>
<evidence type="ECO:0000312" key="6">
    <source>
        <dbReference type="EMBL" id="CCD73776.1"/>
    </source>
</evidence>
<evidence type="ECO:0000312" key="7">
    <source>
        <dbReference type="Proteomes" id="UP000001940"/>
    </source>
</evidence>
<evidence type="ECO:0000312" key="8">
    <source>
        <dbReference type="WormBase" id="Y39A3CL.5a"/>
    </source>
</evidence>
<feature type="chain" id="PRO_0000460489" description="Calpain clp-4">
    <location>
        <begin position="1"/>
        <end position="716"/>
    </location>
</feature>
<feature type="domain" description="Calpain catalytic" evidence="2">
    <location>
        <begin position="240"/>
        <end position="536"/>
    </location>
</feature>
<feature type="region of interest" description="Disordered" evidence="3">
    <location>
        <begin position="31"/>
        <end position="53"/>
    </location>
</feature>
<feature type="active site" evidence="2">
    <location>
        <position position="295"/>
    </location>
</feature>
<feature type="active site" evidence="2">
    <location>
        <position position="452"/>
    </location>
</feature>
<feature type="active site" evidence="2">
    <location>
        <position position="476"/>
    </location>
</feature>
<proteinExistence type="inferred from homology"/>
<name>CAN4_CAEEL</name>
<reference evidence="7" key="1">
    <citation type="journal article" date="1998" name="Science">
        <title>Genome sequence of the nematode C. elegans: a platform for investigating biology.</title>
        <authorList>
            <consortium name="The C. elegans sequencing consortium"/>
        </authorList>
    </citation>
    <scope>NUCLEOTIDE SEQUENCE [LARGE SCALE GENOMIC DNA]</scope>
    <source>
        <strain evidence="7">Bristol N2</strain>
    </source>
</reference>
<reference evidence="5" key="2">
    <citation type="journal article" date="2023" name="Int. J. Mol. Sci.">
        <title>Comparative Analysis of Muscle Atrophy During Spaceflight, Nutritional Deficiency and Disuse in the Nematode Caenorhabditis elegans.</title>
        <authorList>
            <person name="Kim B.S."/>
            <person name="Alcantara A.V. Jr."/>
            <person name="Moon J.H."/>
            <person name="Higashitani A."/>
            <person name="Higashitani N."/>
            <person name="Etheridge T."/>
            <person name="Szewczyk N.J."/>
            <person name="Deane C.S."/>
            <person name="Gaffney C.J."/>
            <person name="Higashibata A."/>
            <person name="Hashizume T."/>
            <person name="Yoon K.H."/>
            <person name="Lee J.I."/>
        </authorList>
    </citation>
    <scope>FUNCTION</scope>
    <scope>DISRUPTION PHENOTYPE</scope>
</reference>
<gene>
    <name evidence="8" type="primary">clp-4</name>
    <name evidence="8" type="ORF">Y39A3CL.5</name>
</gene>
<dbReference type="EC" id="3.4.22.-" evidence="2"/>
<dbReference type="EMBL" id="BX284603">
    <property type="protein sequence ID" value="CCD73776.1"/>
    <property type="molecule type" value="Genomic_DNA"/>
</dbReference>
<dbReference type="RefSeq" id="NP_497460.2">
    <property type="nucleotide sequence ID" value="NM_065059.7"/>
</dbReference>
<dbReference type="SMR" id="Q8IAA9"/>
<dbReference type="FunCoup" id="Q8IAA9">
    <property type="interactions" value="229"/>
</dbReference>
<dbReference type="STRING" id="6239.Y39A3CL.5a.1"/>
<dbReference type="MEROPS" id="C02.A06"/>
<dbReference type="PaxDb" id="6239-Y39A3CL.5a"/>
<dbReference type="PeptideAtlas" id="Q8IAA9"/>
<dbReference type="EnsemblMetazoa" id="Y39A3CL.5a.1">
    <property type="protein sequence ID" value="Y39A3CL.5a.1"/>
    <property type="gene ID" value="WBGene00000545"/>
</dbReference>
<dbReference type="GeneID" id="175326"/>
<dbReference type="KEGG" id="cel:CELE_Y39A3CL.5"/>
<dbReference type="UCSC" id="Y39A3CL.5a">
    <property type="organism name" value="c. elegans"/>
</dbReference>
<dbReference type="AGR" id="WB:WBGene00000545"/>
<dbReference type="CTD" id="175326"/>
<dbReference type="WormBase" id="Y39A3CL.5a">
    <property type="protein sequence ID" value="CE33219"/>
    <property type="gene ID" value="WBGene00000545"/>
    <property type="gene designation" value="clp-4"/>
</dbReference>
<dbReference type="eggNOG" id="KOG0045">
    <property type="taxonomic scope" value="Eukaryota"/>
</dbReference>
<dbReference type="HOGENOM" id="CLU_010982_1_1_1"/>
<dbReference type="InParanoid" id="Q8IAA9"/>
<dbReference type="OMA" id="RMKGLFD"/>
<dbReference type="OrthoDB" id="424753at2759"/>
<dbReference type="PhylomeDB" id="Q8IAA9"/>
<dbReference type="Reactome" id="R-CEL-6798695">
    <property type="pathway name" value="Neutrophil degranulation"/>
</dbReference>
<dbReference type="Proteomes" id="UP000001940">
    <property type="component" value="Chromosome III"/>
</dbReference>
<dbReference type="Bgee" id="WBGene00000545">
    <property type="expression patterns" value="Expressed in larva and 3 other cell types or tissues"/>
</dbReference>
<dbReference type="ExpressionAtlas" id="Q8IAA9">
    <property type="expression patterns" value="baseline and differential"/>
</dbReference>
<dbReference type="GO" id="GO:0005737">
    <property type="term" value="C:cytoplasm"/>
    <property type="evidence" value="ECO:0000318"/>
    <property type="project" value="GO_Central"/>
</dbReference>
<dbReference type="GO" id="GO:0004198">
    <property type="term" value="F:calcium-dependent cysteine-type endopeptidase activity"/>
    <property type="evidence" value="ECO:0000318"/>
    <property type="project" value="GO_Central"/>
</dbReference>
<dbReference type="GO" id="GO:0006508">
    <property type="term" value="P:proteolysis"/>
    <property type="evidence" value="ECO:0000318"/>
    <property type="project" value="GO_Central"/>
</dbReference>
<dbReference type="CDD" id="cd00214">
    <property type="entry name" value="Calpain_III"/>
    <property type="match status" value="1"/>
</dbReference>
<dbReference type="CDD" id="cd00044">
    <property type="entry name" value="CysPc"/>
    <property type="match status" value="1"/>
</dbReference>
<dbReference type="FunFam" id="3.90.70.10:FF:000001">
    <property type="entry name" value="Calpain-1 catalytic subunit"/>
    <property type="match status" value="1"/>
</dbReference>
<dbReference type="FunFam" id="2.60.120.380:FF:000002">
    <property type="entry name" value="calpain-3 isoform X1"/>
    <property type="match status" value="1"/>
</dbReference>
<dbReference type="Gene3D" id="2.60.120.380">
    <property type="match status" value="1"/>
</dbReference>
<dbReference type="Gene3D" id="3.90.70.10">
    <property type="entry name" value="Cysteine proteinases"/>
    <property type="match status" value="1"/>
</dbReference>
<dbReference type="InterPro" id="IPR033883">
    <property type="entry name" value="C2_III"/>
</dbReference>
<dbReference type="InterPro" id="IPR022684">
    <property type="entry name" value="Calpain_cysteine_protease"/>
</dbReference>
<dbReference type="InterPro" id="IPR022682">
    <property type="entry name" value="Calpain_domain_III"/>
</dbReference>
<dbReference type="InterPro" id="IPR022683">
    <property type="entry name" value="Calpain_III"/>
</dbReference>
<dbReference type="InterPro" id="IPR036213">
    <property type="entry name" value="Calpain_III_sf"/>
</dbReference>
<dbReference type="InterPro" id="IPR038765">
    <property type="entry name" value="Papain-like_cys_pep_sf"/>
</dbReference>
<dbReference type="InterPro" id="IPR000169">
    <property type="entry name" value="Pept_cys_AS"/>
</dbReference>
<dbReference type="InterPro" id="IPR001300">
    <property type="entry name" value="Peptidase_C2_calpain_cat"/>
</dbReference>
<dbReference type="PANTHER" id="PTHR10183">
    <property type="entry name" value="CALPAIN"/>
    <property type="match status" value="1"/>
</dbReference>
<dbReference type="PANTHER" id="PTHR10183:SF262">
    <property type="entry name" value="CALPAIN CATALYTIC DOMAIN-CONTAINING PROTEIN"/>
    <property type="match status" value="1"/>
</dbReference>
<dbReference type="Pfam" id="PF01067">
    <property type="entry name" value="Calpain_III"/>
    <property type="match status" value="1"/>
</dbReference>
<dbReference type="Pfam" id="PF00648">
    <property type="entry name" value="Peptidase_C2"/>
    <property type="match status" value="1"/>
</dbReference>
<dbReference type="PRINTS" id="PR00704">
    <property type="entry name" value="CALPAIN"/>
</dbReference>
<dbReference type="SMART" id="SM00720">
    <property type="entry name" value="calpain_III"/>
    <property type="match status" value="1"/>
</dbReference>
<dbReference type="SMART" id="SM00230">
    <property type="entry name" value="CysPc"/>
    <property type="match status" value="1"/>
</dbReference>
<dbReference type="SUPFAM" id="SSF49758">
    <property type="entry name" value="Calpain large subunit, middle domain (domain III)"/>
    <property type="match status" value="1"/>
</dbReference>
<dbReference type="SUPFAM" id="SSF54001">
    <property type="entry name" value="Cysteine proteinases"/>
    <property type="match status" value="1"/>
</dbReference>
<dbReference type="PROSITE" id="PS50203">
    <property type="entry name" value="CALPAIN_CAT"/>
    <property type="match status" value="1"/>
</dbReference>
<dbReference type="PROSITE" id="PS00139">
    <property type="entry name" value="THIOL_PROTEASE_CYS"/>
    <property type="match status" value="1"/>
</dbReference>
<keyword id="KW-0378">Hydrolase</keyword>
<keyword id="KW-0645">Protease</keyword>
<keyword id="KW-1185">Reference proteome</keyword>
<keyword id="KW-0788">Thiol protease</keyword>
<sequence>MANHAKLVDQEIYRSPVDDFELNYQEYLNDDDDDKQEAPVAVSKAPKGKGSNHGLGCRMKGLFDGFGGTDLKTIMRHLRRRRPKSGQALTNFMLSGNMEKVVDQHVKDFVHHFGRINPENGRIMGALRGNDFFNFGGLHNNLGNTGKVYLDNLMKGKCGKKRKVHKFKPIVVEELDFGAPKPAVPATPKAPVAPVAPVIPAPAVTPQKPKVDEPTYADSVSDFGLDFETEREKCLRNKTLFEDPEFPATAASLYYRTPPRDRIIWKRPGEIIANPQLITQGESRFDVKQGALGDCWFLAALANITLYDALFYRIVPPNQSFTENYAGIFHFQFWHYGKWVDVVVDDRLPTVNNQLYYLHSADNTEFWSALVEKAYAKLHGGYENLDGGTTAEALEDFTGGLTEYFDLRKSEKAAVLAALVKGMEMGSLFGCSIDADANIKEAQLRNGLVCGHAYSITAIHSITYYGEDTTLLRLRNPWGNEKEWNGAWSDGSSEWSKIDEATKKQIDVQFARDGEFWMSFEDFFSNFTQMEVCNLTAEIFDEIAEMTGVNRATETVEEEHQWHEIMEDGEWSSKKGTAGGCNNNPSTYPKNPQFSTFFTAPQSSIEADGNVTVIVAVLQKYRRELRSKGKDVLPIGVSIYSLGAEGTARSPLTAQFFSQNRPIARTTVFVNTREVTVRFRVPPGQYVIVPCTFDAYDDAEFLLRVYANGTLKSSLL</sequence>